<evidence type="ECO:0000250" key="1">
    <source>
        <dbReference type="UniProtKB" id="Q8K2Y0"/>
    </source>
</evidence>
<evidence type="ECO:0000255" key="2"/>
<evidence type="ECO:0000255" key="3">
    <source>
        <dbReference type="PROSITE-ProRule" id="PRU00175"/>
    </source>
</evidence>
<evidence type="ECO:0000256" key="4">
    <source>
        <dbReference type="SAM" id="MobiDB-lite"/>
    </source>
</evidence>
<evidence type="ECO:0000269" key="5">
    <source>
    </source>
</evidence>
<evidence type="ECO:0000303" key="6">
    <source>
    </source>
</evidence>
<evidence type="ECO:0000305" key="7"/>
<evidence type="ECO:0000312" key="8">
    <source>
        <dbReference type="HGNC" id="HGNC:20308"/>
    </source>
</evidence>
<evidence type="ECO:0007744" key="9">
    <source>
    </source>
</evidence>
<evidence type="ECO:0007744" key="10">
    <source>
    </source>
</evidence>
<reference key="1">
    <citation type="journal article" date="2001" name="Genome Res.">
        <title>Towards a catalog of human genes and proteins: sequencing and analysis of 500 novel complete protein coding human cDNAs.</title>
        <authorList>
            <person name="Wiemann S."/>
            <person name="Weil B."/>
            <person name="Wellenreuther R."/>
            <person name="Gassenhuber J."/>
            <person name="Glassl S."/>
            <person name="Ansorge W."/>
            <person name="Boecher M."/>
            <person name="Bloecker H."/>
            <person name="Bauersachs S."/>
            <person name="Blum H."/>
            <person name="Lauber J."/>
            <person name="Duesterhoeft A."/>
            <person name="Beyer A."/>
            <person name="Koehrer K."/>
            <person name="Strack N."/>
            <person name="Mewes H.-W."/>
            <person name="Ottenwaelder B."/>
            <person name="Obermaier B."/>
            <person name="Tampe J."/>
            <person name="Heubner D."/>
            <person name="Wambutt R."/>
            <person name="Korn B."/>
            <person name="Klein M."/>
            <person name="Poustka A."/>
        </authorList>
    </citation>
    <scope>NUCLEOTIDE SEQUENCE [LARGE SCALE MRNA]</scope>
    <source>
        <tissue>Brain</tissue>
    </source>
</reference>
<reference key="2">
    <citation type="journal article" date="2004" name="Nature">
        <title>The DNA sequence and analysis of human chromosome 13.</title>
        <authorList>
            <person name="Dunham A."/>
            <person name="Matthews L.H."/>
            <person name="Burton J."/>
            <person name="Ashurst J.L."/>
            <person name="Howe K.L."/>
            <person name="Ashcroft K.J."/>
            <person name="Beare D.M."/>
            <person name="Burford D.C."/>
            <person name="Hunt S.E."/>
            <person name="Griffiths-Jones S."/>
            <person name="Jones M.C."/>
            <person name="Keenan S.J."/>
            <person name="Oliver K."/>
            <person name="Scott C.E."/>
            <person name="Ainscough R."/>
            <person name="Almeida J.P."/>
            <person name="Ambrose K.D."/>
            <person name="Andrews D.T."/>
            <person name="Ashwell R.I.S."/>
            <person name="Babbage A.K."/>
            <person name="Bagguley C.L."/>
            <person name="Bailey J."/>
            <person name="Bannerjee R."/>
            <person name="Barlow K.F."/>
            <person name="Bates K."/>
            <person name="Beasley H."/>
            <person name="Bird C.P."/>
            <person name="Bray-Allen S."/>
            <person name="Brown A.J."/>
            <person name="Brown J.Y."/>
            <person name="Burrill W."/>
            <person name="Carder C."/>
            <person name="Carter N.P."/>
            <person name="Chapman J.C."/>
            <person name="Clamp M.E."/>
            <person name="Clark S.Y."/>
            <person name="Clarke G."/>
            <person name="Clee C.M."/>
            <person name="Clegg S.C."/>
            <person name="Cobley V."/>
            <person name="Collins J.E."/>
            <person name="Corby N."/>
            <person name="Coville G.J."/>
            <person name="Deloukas P."/>
            <person name="Dhami P."/>
            <person name="Dunham I."/>
            <person name="Dunn M."/>
            <person name="Earthrowl M.E."/>
            <person name="Ellington A.G."/>
            <person name="Faulkner L."/>
            <person name="Frankish A.G."/>
            <person name="Frankland J."/>
            <person name="French L."/>
            <person name="Garner P."/>
            <person name="Garnett J."/>
            <person name="Gilbert J.G.R."/>
            <person name="Gilson C.J."/>
            <person name="Ghori J."/>
            <person name="Grafham D.V."/>
            <person name="Gribble S.M."/>
            <person name="Griffiths C."/>
            <person name="Hall R.E."/>
            <person name="Hammond S."/>
            <person name="Harley J.L."/>
            <person name="Hart E.A."/>
            <person name="Heath P.D."/>
            <person name="Howden P.J."/>
            <person name="Huckle E.J."/>
            <person name="Hunt P.J."/>
            <person name="Hunt A.R."/>
            <person name="Johnson C."/>
            <person name="Johnson D."/>
            <person name="Kay M."/>
            <person name="Kimberley A.M."/>
            <person name="King A."/>
            <person name="Laird G.K."/>
            <person name="Langford C.J."/>
            <person name="Lawlor S."/>
            <person name="Leongamornlert D.A."/>
            <person name="Lloyd D.M."/>
            <person name="Lloyd C."/>
            <person name="Loveland J.E."/>
            <person name="Lovell J."/>
            <person name="Martin S."/>
            <person name="Mashreghi-Mohammadi M."/>
            <person name="McLaren S.J."/>
            <person name="McMurray A."/>
            <person name="Milne S."/>
            <person name="Moore M.J.F."/>
            <person name="Nickerson T."/>
            <person name="Palmer S.A."/>
            <person name="Pearce A.V."/>
            <person name="Peck A.I."/>
            <person name="Pelan S."/>
            <person name="Phillimore B."/>
            <person name="Porter K.M."/>
            <person name="Rice C.M."/>
            <person name="Searle S."/>
            <person name="Sehra H.K."/>
            <person name="Shownkeen R."/>
            <person name="Skuce C.D."/>
            <person name="Smith M."/>
            <person name="Steward C.A."/>
            <person name="Sycamore N."/>
            <person name="Tester J."/>
            <person name="Thomas D.W."/>
            <person name="Tracey A."/>
            <person name="Tromans A."/>
            <person name="Tubby B."/>
            <person name="Wall M."/>
            <person name="Wallis J.M."/>
            <person name="West A.P."/>
            <person name="Whitehead S.L."/>
            <person name="Willey D.L."/>
            <person name="Wilming L."/>
            <person name="Wray P.W."/>
            <person name="Wright M.W."/>
            <person name="Young L."/>
            <person name="Coulson A."/>
            <person name="Durbin R.M."/>
            <person name="Hubbard T."/>
            <person name="Sulston J.E."/>
            <person name="Beck S."/>
            <person name="Bentley D.R."/>
            <person name="Rogers J."/>
            <person name="Ross M.T."/>
        </authorList>
    </citation>
    <scope>NUCLEOTIDE SEQUENCE [LARGE SCALE GENOMIC DNA]</scope>
</reference>
<reference key="3">
    <citation type="submission" date="2005-07" db="EMBL/GenBank/DDBJ databases">
        <authorList>
            <person name="Mural R.J."/>
            <person name="Istrail S."/>
            <person name="Sutton G.G."/>
            <person name="Florea L."/>
            <person name="Halpern A.L."/>
            <person name="Mobarry C.M."/>
            <person name="Lippert R."/>
            <person name="Walenz B."/>
            <person name="Shatkay H."/>
            <person name="Dew I."/>
            <person name="Miller J.R."/>
            <person name="Flanigan M.J."/>
            <person name="Edwards N.J."/>
            <person name="Bolanos R."/>
            <person name="Fasulo D."/>
            <person name="Halldorsson B.V."/>
            <person name="Hannenhalli S."/>
            <person name="Turner R."/>
            <person name="Yooseph S."/>
            <person name="Lu F."/>
            <person name="Nusskern D.R."/>
            <person name="Shue B.C."/>
            <person name="Zheng X.H."/>
            <person name="Zhong F."/>
            <person name="Delcher A.L."/>
            <person name="Huson D.H."/>
            <person name="Kravitz S.A."/>
            <person name="Mouchard L."/>
            <person name="Reinert K."/>
            <person name="Remington K.A."/>
            <person name="Clark A.G."/>
            <person name="Waterman M.S."/>
            <person name="Eichler E.E."/>
            <person name="Adams M.D."/>
            <person name="Hunkapiller M.W."/>
            <person name="Myers E.W."/>
            <person name="Venter J.C."/>
        </authorList>
    </citation>
    <scope>NUCLEOTIDE SEQUENCE [LARGE SCALE GENOMIC DNA]</scope>
</reference>
<reference key="4">
    <citation type="journal article" date="2004" name="Genome Res.">
        <title>The status, quality, and expansion of the NIH full-length cDNA project: the Mammalian Gene Collection (MGC).</title>
        <authorList>
            <consortium name="The MGC Project Team"/>
        </authorList>
    </citation>
    <scope>NUCLEOTIDE SEQUENCE [LARGE SCALE MRNA]</scope>
    <source>
        <tissue>Brain</tissue>
        <tissue>Testis</tissue>
    </source>
</reference>
<reference key="5">
    <citation type="journal article" date="2004" name="Nat. Genet.">
        <title>Complete sequencing and characterization of 21,243 full-length human cDNAs.</title>
        <authorList>
            <person name="Ota T."/>
            <person name="Suzuki Y."/>
            <person name="Nishikawa T."/>
            <person name="Otsuki T."/>
            <person name="Sugiyama T."/>
            <person name="Irie R."/>
            <person name="Wakamatsu A."/>
            <person name="Hayashi K."/>
            <person name="Sato H."/>
            <person name="Nagai K."/>
            <person name="Kimura K."/>
            <person name="Makita H."/>
            <person name="Sekine M."/>
            <person name="Obayashi M."/>
            <person name="Nishi T."/>
            <person name="Shibahara T."/>
            <person name="Tanaka T."/>
            <person name="Ishii S."/>
            <person name="Yamamoto J."/>
            <person name="Saito K."/>
            <person name="Kawai Y."/>
            <person name="Isono Y."/>
            <person name="Nakamura Y."/>
            <person name="Nagahari K."/>
            <person name="Murakami K."/>
            <person name="Yasuda T."/>
            <person name="Iwayanagi T."/>
            <person name="Wagatsuma M."/>
            <person name="Shiratori A."/>
            <person name="Sudo H."/>
            <person name="Hosoiri T."/>
            <person name="Kaku Y."/>
            <person name="Kodaira H."/>
            <person name="Kondo H."/>
            <person name="Sugawara M."/>
            <person name="Takahashi M."/>
            <person name="Kanda K."/>
            <person name="Yokoi T."/>
            <person name="Furuya T."/>
            <person name="Kikkawa E."/>
            <person name="Omura Y."/>
            <person name="Abe K."/>
            <person name="Kamihara K."/>
            <person name="Katsuta N."/>
            <person name="Sato K."/>
            <person name="Tanikawa M."/>
            <person name="Yamazaki M."/>
            <person name="Ninomiya K."/>
            <person name="Ishibashi T."/>
            <person name="Yamashita H."/>
            <person name="Murakawa K."/>
            <person name="Fujimori K."/>
            <person name="Tanai H."/>
            <person name="Kimata M."/>
            <person name="Watanabe M."/>
            <person name="Hiraoka S."/>
            <person name="Chiba Y."/>
            <person name="Ishida S."/>
            <person name="Ono Y."/>
            <person name="Takiguchi S."/>
            <person name="Watanabe S."/>
            <person name="Yosida M."/>
            <person name="Hotuta T."/>
            <person name="Kusano J."/>
            <person name="Kanehori K."/>
            <person name="Takahashi-Fujii A."/>
            <person name="Hara H."/>
            <person name="Tanase T.-O."/>
            <person name="Nomura Y."/>
            <person name="Togiya S."/>
            <person name="Komai F."/>
            <person name="Hara R."/>
            <person name="Takeuchi K."/>
            <person name="Arita M."/>
            <person name="Imose N."/>
            <person name="Musashino K."/>
            <person name="Yuuki H."/>
            <person name="Oshima A."/>
            <person name="Sasaki N."/>
            <person name="Aotsuka S."/>
            <person name="Yoshikawa Y."/>
            <person name="Matsunawa H."/>
            <person name="Ichihara T."/>
            <person name="Shiohata N."/>
            <person name="Sano S."/>
            <person name="Moriya S."/>
            <person name="Momiyama H."/>
            <person name="Satoh N."/>
            <person name="Takami S."/>
            <person name="Terashima Y."/>
            <person name="Suzuki O."/>
            <person name="Nakagawa S."/>
            <person name="Senoh A."/>
            <person name="Mizoguchi H."/>
            <person name="Goto Y."/>
            <person name="Shimizu F."/>
            <person name="Wakebe H."/>
            <person name="Hishigaki H."/>
            <person name="Watanabe T."/>
            <person name="Sugiyama A."/>
            <person name="Takemoto M."/>
            <person name="Kawakami B."/>
            <person name="Yamazaki M."/>
            <person name="Watanabe K."/>
            <person name="Kumagai A."/>
            <person name="Itakura S."/>
            <person name="Fukuzumi Y."/>
            <person name="Fujimori Y."/>
            <person name="Komiyama M."/>
            <person name="Tashiro H."/>
            <person name="Tanigami A."/>
            <person name="Fujiwara T."/>
            <person name="Ono T."/>
            <person name="Yamada K."/>
            <person name="Fujii Y."/>
            <person name="Ozaki K."/>
            <person name="Hirao M."/>
            <person name="Ohmori Y."/>
            <person name="Kawabata A."/>
            <person name="Hikiji T."/>
            <person name="Kobatake N."/>
            <person name="Inagaki H."/>
            <person name="Ikema Y."/>
            <person name="Okamoto S."/>
            <person name="Okitani R."/>
            <person name="Kawakami T."/>
            <person name="Noguchi S."/>
            <person name="Itoh T."/>
            <person name="Shigeta K."/>
            <person name="Senba T."/>
            <person name="Matsumura K."/>
            <person name="Nakajima Y."/>
            <person name="Mizuno T."/>
            <person name="Morinaga M."/>
            <person name="Sasaki M."/>
            <person name="Togashi T."/>
            <person name="Oyama M."/>
            <person name="Hata H."/>
            <person name="Watanabe M."/>
            <person name="Komatsu T."/>
            <person name="Mizushima-Sugano J."/>
            <person name="Satoh T."/>
            <person name="Shirai Y."/>
            <person name="Takahashi Y."/>
            <person name="Nakagawa K."/>
            <person name="Okumura K."/>
            <person name="Nagase T."/>
            <person name="Nomura N."/>
            <person name="Kikuchi H."/>
            <person name="Masuho Y."/>
            <person name="Yamashita R."/>
            <person name="Nakai K."/>
            <person name="Yada T."/>
            <person name="Nakamura Y."/>
            <person name="Ohara O."/>
            <person name="Isogai T."/>
            <person name="Sugano S."/>
        </authorList>
    </citation>
    <scope>NUCLEOTIDE SEQUENCE [LARGE SCALE MRNA] OF 175-726</scope>
    <source>
        <tissue>Placenta</tissue>
    </source>
</reference>
<reference key="6">
    <citation type="journal article" date="2007" name="Science">
        <title>ATM and ATR substrate analysis reveals extensive protein networks responsive to DNA damage.</title>
        <authorList>
            <person name="Matsuoka S."/>
            <person name="Ballif B.A."/>
            <person name="Smogorzewska A."/>
            <person name="McDonald E.R. III"/>
            <person name="Hurov K.E."/>
            <person name="Luo J."/>
            <person name="Bakalarski C.E."/>
            <person name="Zhao Z."/>
            <person name="Solimini N."/>
            <person name="Lerenthal Y."/>
            <person name="Shiloh Y."/>
            <person name="Gygi S.P."/>
            <person name="Elledge S.J."/>
        </authorList>
    </citation>
    <scope>IDENTIFICATION BY MASS SPECTROMETRY [LARGE SCALE ANALYSIS]</scope>
    <source>
        <tissue>Embryonic kidney</tissue>
    </source>
</reference>
<reference key="7">
    <citation type="journal article" date="2008" name="Proc. Natl. Acad. Sci. U.S.A.">
        <title>A quantitative atlas of mitotic phosphorylation.</title>
        <authorList>
            <person name="Dephoure N."/>
            <person name="Zhou C."/>
            <person name="Villen J."/>
            <person name="Beausoleil S.A."/>
            <person name="Bakalarski C.E."/>
            <person name="Elledge S.J."/>
            <person name="Gygi S.P."/>
        </authorList>
    </citation>
    <scope>IDENTIFICATION BY MASS SPECTROMETRY [LARGE SCALE ANALYSIS]</scope>
    <source>
        <tissue>Cervix carcinoma</tissue>
    </source>
</reference>
<reference key="8">
    <citation type="journal article" date="2009" name="Anal. Chem.">
        <title>Lys-N and trypsin cover complementary parts of the phosphoproteome in a refined SCX-based approach.</title>
        <authorList>
            <person name="Gauci S."/>
            <person name="Helbig A.O."/>
            <person name="Slijper M."/>
            <person name="Krijgsveld J."/>
            <person name="Heck A.J."/>
            <person name="Mohammed S."/>
        </authorList>
    </citation>
    <scope>IDENTIFICATION BY MASS SPECTROMETRY [LARGE SCALE ANALYSIS]</scope>
</reference>
<reference key="9">
    <citation type="journal article" date="2009" name="Sci. Signal.">
        <title>Quantitative phosphoproteomic analysis of T cell receptor signaling reveals system-wide modulation of protein-protein interactions.</title>
        <authorList>
            <person name="Mayya V."/>
            <person name="Lundgren D.H."/>
            <person name="Hwang S.-I."/>
            <person name="Rezaul K."/>
            <person name="Wu L."/>
            <person name="Eng J.K."/>
            <person name="Rodionov V."/>
            <person name="Han D.K."/>
        </authorList>
    </citation>
    <scope>IDENTIFICATION BY MASS SPECTROMETRY [LARGE SCALE ANALYSIS]</scope>
    <source>
        <tissue>Leukemic T-cell</tissue>
    </source>
</reference>
<reference key="10">
    <citation type="journal article" date="2010" name="Sci. Signal.">
        <title>Quantitative phosphoproteomics reveals widespread full phosphorylation site occupancy during mitosis.</title>
        <authorList>
            <person name="Olsen J.V."/>
            <person name="Vermeulen M."/>
            <person name="Santamaria A."/>
            <person name="Kumar C."/>
            <person name="Miller M.L."/>
            <person name="Jensen L.J."/>
            <person name="Gnad F."/>
            <person name="Cox J."/>
            <person name="Jensen T.S."/>
            <person name="Nigg E.A."/>
            <person name="Brunak S."/>
            <person name="Mann M."/>
        </authorList>
    </citation>
    <scope>PHOSPHORYLATION [LARGE SCALE ANALYSIS] AT SER-719</scope>
    <scope>IDENTIFICATION BY MASS SPECTROMETRY [LARGE SCALE ANALYSIS]</scope>
    <source>
        <tissue>Cervix carcinoma</tissue>
    </source>
</reference>
<reference key="11">
    <citation type="journal article" date="2011" name="Sci. Signal.">
        <title>System-wide temporal characterization of the proteome and phosphoproteome of human embryonic stem cell differentiation.</title>
        <authorList>
            <person name="Rigbolt K.T."/>
            <person name="Prokhorova T.A."/>
            <person name="Akimov V."/>
            <person name="Henningsen J."/>
            <person name="Johansen P.T."/>
            <person name="Kratchmarova I."/>
            <person name="Kassem M."/>
            <person name="Mann M."/>
            <person name="Olsen J.V."/>
            <person name="Blagoev B."/>
        </authorList>
    </citation>
    <scope>IDENTIFICATION BY MASS SPECTROMETRY [LARGE SCALE ANALYSIS]</scope>
</reference>
<reference key="12">
    <citation type="journal article" date="2013" name="J. Proteome Res.">
        <title>Toward a comprehensive characterization of a human cancer cell phosphoproteome.</title>
        <authorList>
            <person name="Zhou H."/>
            <person name="Di Palma S."/>
            <person name="Preisinger C."/>
            <person name="Peng M."/>
            <person name="Polat A.N."/>
            <person name="Heck A.J."/>
            <person name="Mohammed S."/>
        </authorList>
    </citation>
    <scope>PHOSPHORYLATION [LARGE SCALE ANALYSIS] AT SER-210; SER-526; SER-561 AND SER-721</scope>
    <scope>IDENTIFICATION BY MASS SPECTROMETRY [LARGE SCALE ANALYSIS]</scope>
    <source>
        <tissue>Cervix carcinoma</tissue>
        <tissue>Erythroleukemia</tissue>
    </source>
</reference>
<reference key="13">
    <citation type="journal article" date="2019" name="Nat. Commun.">
        <title>The ORC ubiquitin ligase OBI1 promotes DNA replication origin firing.</title>
        <authorList>
            <person name="Coulombe P."/>
            <person name="Nassar J."/>
            <person name="Peiffer I."/>
            <person name="Stanojcic S."/>
            <person name="Sterkers Y."/>
            <person name="Delamarre A."/>
            <person name="Bocquet S."/>
            <person name="Mechali M."/>
        </authorList>
    </citation>
    <scope>FUNCTION</scope>
    <scope>CATALYTIC ACTIVITY</scope>
    <scope>CHROMATIN-BINDING</scope>
    <scope>INTERACTION WITH ORC COMPLEX</scope>
    <scope>MUTAGENESIS OF CYS-38</scope>
    <scope>SUBCELLULAR LOCATION</scope>
    <scope>AUTO-UBIQUITINATION</scope>
</reference>
<protein>
    <recommendedName>
        <fullName evidence="7">ORC ubiquitin ligase 1</fullName>
        <shortName evidence="6">OBI1</shortName>
        <ecNumber evidence="5">2.3.2.27</ecNumber>
    </recommendedName>
    <alternativeName>
        <fullName>RING finger protein 219</fullName>
    </alternativeName>
</protein>
<organism>
    <name type="scientific">Homo sapiens</name>
    <name type="common">Human</name>
    <dbReference type="NCBI Taxonomy" id="9606"/>
    <lineage>
        <taxon>Eukaryota</taxon>
        <taxon>Metazoa</taxon>
        <taxon>Chordata</taxon>
        <taxon>Craniata</taxon>
        <taxon>Vertebrata</taxon>
        <taxon>Euteleostomi</taxon>
        <taxon>Mammalia</taxon>
        <taxon>Eutheria</taxon>
        <taxon>Euarchontoglires</taxon>
        <taxon>Primates</taxon>
        <taxon>Haplorrhini</taxon>
        <taxon>Catarrhini</taxon>
        <taxon>Hominidae</taxon>
        <taxon>Homo</taxon>
    </lineage>
</organism>
<proteinExistence type="evidence at protein level"/>
<accession>Q5W0B1</accession>
<accession>B2RN99</accession>
<accession>Q8TBY2</accession>
<accession>Q9H0T2</accession>
<accession>Q9H8M0</accession>
<keyword id="KW-0158">Chromosome</keyword>
<keyword id="KW-0175">Coiled coil</keyword>
<keyword id="KW-0479">Metal-binding</keyword>
<keyword id="KW-0597">Phosphoprotein</keyword>
<keyword id="KW-1267">Proteomics identification</keyword>
<keyword id="KW-1185">Reference proteome</keyword>
<keyword id="KW-0808">Transferase</keyword>
<keyword id="KW-0832">Ubl conjugation</keyword>
<keyword id="KW-0833">Ubl conjugation pathway</keyword>
<keyword id="KW-0862">Zinc</keyword>
<keyword id="KW-0863">Zinc-finger</keyword>
<sequence length="726" mass="81116">MAQTVQNVTLSLTLPITCHICLGKVRQPVICINNHVFCSICIDLWLKNNSQCPACRVPITPENPCKEIIGGTSESEPMLSHTVRKHLRKTRLELLHKEYEDEIDCLQKEVEELKSKNLSLESQIKTILDPLTLVQGNQNEDKHLVTDNPSKINPETVAEWKKKLRTANEIYEKVKDDVDKLKEANKKLKLENGGLVRENLRLKAEVDNRSPQKFGRFAVAALQSKVEQYERETNRLKKALERSDKYIEELESQVAQLKNSSEEKEAMNSICQTALSADGKGSKGSEEDVVSKNQGDSARKQPGSSTSSSSHLAKPSSSRLCDTSSARQESTSKADLNCSKNKDLYQEQVEVMLDVTDTSMDTYLEREWGNKPSDCVPYKDEELYDLPAPCTPLSLSCLQLSTPENRESSVVQAGGSKKHSNHLRKLVFDDFCDSSNVSNKDSSEDDISRSENEKKSECFSSPKTGFWDCCSTSYAQNLDFESSEGNTIANSVGEISSKLSEKSGLCLSKRLNSIRSFEMNRTRTSSEASMDAAYLDKISELDSMMSESDNSKSPCNNGFKSLDLDGLSKSSQGSEFLEEPDKLEEKTELNLSKGSLTNDQLENGSEWKPTSFFLLSPSDQEMNEDFSLHSSSCPVTNEIKPPSCLFQTEFSQGILLSSSHRLFEDQRFGSSLFKMSSEMHSLHNHLQSPWSTSFVPEKRNKNVNQSTKRKIQSSLSSASPSKATKS</sequence>
<gene>
    <name evidence="8" type="primary">OBI1</name>
    <name type="synonym">C13orf7</name>
    <name type="synonym">RNF219</name>
</gene>
<name>OBI1_HUMAN</name>
<dbReference type="EC" id="2.3.2.27" evidence="5"/>
<dbReference type="EMBL" id="AL136651">
    <property type="protein sequence ID" value="CAB66586.3"/>
    <property type="status" value="ALT_SEQ"/>
    <property type="molecule type" value="mRNA"/>
</dbReference>
<dbReference type="EMBL" id="AL139319">
    <property type="status" value="NOT_ANNOTATED_CDS"/>
    <property type="molecule type" value="Genomic_DNA"/>
</dbReference>
<dbReference type="EMBL" id="AL445209">
    <property type="status" value="NOT_ANNOTATED_CDS"/>
    <property type="molecule type" value="Genomic_DNA"/>
</dbReference>
<dbReference type="EMBL" id="BC028586">
    <property type="status" value="NOT_ANNOTATED_CDS"/>
    <property type="molecule type" value="mRNA"/>
</dbReference>
<dbReference type="EMBL" id="CH471093">
    <property type="protein sequence ID" value="EAW80586.1"/>
    <property type="molecule type" value="Genomic_DNA"/>
</dbReference>
<dbReference type="EMBL" id="BC136764">
    <property type="protein sequence ID" value="AAI36765.1"/>
    <property type="molecule type" value="mRNA"/>
</dbReference>
<dbReference type="EMBL" id="BC136765">
    <property type="protein sequence ID" value="AAI36766.1"/>
    <property type="molecule type" value="mRNA"/>
</dbReference>
<dbReference type="EMBL" id="AK023511">
    <property type="protein sequence ID" value="BAB14594.1"/>
    <property type="status" value="ALT_INIT"/>
    <property type="molecule type" value="mRNA"/>
</dbReference>
<dbReference type="CCDS" id="CCDS31997.1"/>
<dbReference type="RefSeq" id="NP_078822.3">
    <property type="nucleotide sequence ID" value="NM_024546.3"/>
</dbReference>
<dbReference type="SMR" id="Q5W0B1"/>
<dbReference type="BioGRID" id="122736">
    <property type="interactions" value="173"/>
</dbReference>
<dbReference type="FunCoup" id="Q5W0B1">
    <property type="interactions" value="1065"/>
</dbReference>
<dbReference type="IntAct" id="Q5W0B1">
    <property type="interactions" value="123"/>
</dbReference>
<dbReference type="MINT" id="Q5W0B1"/>
<dbReference type="STRING" id="9606.ENSP00000282003"/>
<dbReference type="GlyGen" id="Q5W0B1">
    <property type="glycosylation" value="5 sites, 2 N-linked glycans (4 sites), 1 O-linked glycan (1 site)"/>
</dbReference>
<dbReference type="iPTMnet" id="Q5W0B1"/>
<dbReference type="PhosphoSitePlus" id="Q5W0B1"/>
<dbReference type="BioMuta" id="RNF219"/>
<dbReference type="DMDM" id="73917812"/>
<dbReference type="jPOST" id="Q5W0B1"/>
<dbReference type="MassIVE" id="Q5W0B1"/>
<dbReference type="PaxDb" id="9606-ENSP00000282003"/>
<dbReference type="PeptideAtlas" id="Q5W0B1"/>
<dbReference type="ProteomicsDB" id="65758"/>
<dbReference type="Pumba" id="Q5W0B1"/>
<dbReference type="Antibodypedia" id="24695">
    <property type="antibodies" value="156 antibodies from 22 providers"/>
</dbReference>
<dbReference type="DNASU" id="79596"/>
<dbReference type="Ensembl" id="ENST00000282003.7">
    <property type="protein sequence ID" value="ENSP00000282003.6"/>
    <property type="gene ID" value="ENSG00000152193.8"/>
</dbReference>
<dbReference type="GeneID" id="79596"/>
<dbReference type="KEGG" id="hsa:79596"/>
<dbReference type="MANE-Select" id="ENST00000282003.7">
    <property type="protein sequence ID" value="ENSP00000282003.6"/>
    <property type="RefSeq nucleotide sequence ID" value="NM_024546.4"/>
    <property type="RefSeq protein sequence ID" value="NP_078822.3"/>
</dbReference>
<dbReference type="UCSC" id="uc001vkw.2">
    <property type="organism name" value="human"/>
</dbReference>
<dbReference type="AGR" id="HGNC:20308"/>
<dbReference type="CTD" id="79596"/>
<dbReference type="DisGeNET" id="79596"/>
<dbReference type="GeneCards" id="OBI1"/>
<dbReference type="HGNC" id="HGNC:20308">
    <property type="gene designation" value="OBI1"/>
</dbReference>
<dbReference type="HPA" id="ENSG00000152193">
    <property type="expression patterns" value="Low tissue specificity"/>
</dbReference>
<dbReference type="MIM" id="615906">
    <property type="type" value="gene"/>
</dbReference>
<dbReference type="neXtProt" id="NX_Q5W0B1"/>
<dbReference type="OpenTargets" id="ENSG00000152193"/>
<dbReference type="VEuPathDB" id="HostDB:ENSG00000152193"/>
<dbReference type="eggNOG" id="ENOG502QTFT">
    <property type="taxonomic scope" value="Eukaryota"/>
</dbReference>
<dbReference type="GeneTree" id="ENSGT00390000013512"/>
<dbReference type="HOGENOM" id="CLU_023039_0_0_1"/>
<dbReference type="InParanoid" id="Q5W0B1"/>
<dbReference type="OMA" id="NDMYEKV"/>
<dbReference type="OrthoDB" id="6105938at2759"/>
<dbReference type="PAN-GO" id="Q5W0B1">
    <property type="GO annotations" value="0 GO annotations based on evolutionary models"/>
</dbReference>
<dbReference type="PhylomeDB" id="Q5W0B1"/>
<dbReference type="TreeFam" id="TF329331"/>
<dbReference type="PathwayCommons" id="Q5W0B1"/>
<dbReference type="SignaLink" id="Q5W0B1"/>
<dbReference type="SIGNOR" id="Q5W0B1"/>
<dbReference type="BioGRID-ORCS" id="79596">
    <property type="hits" value="15 hits in 1188 CRISPR screens"/>
</dbReference>
<dbReference type="CD-CODE" id="232F8A39">
    <property type="entry name" value="P-body"/>
</dbReference>
<dbReference type="CD-CODE" id="DEE660B4">
    <property type="entry name" value="Stress granule"/>
</dbReference>
<dbReference type="ChiTaRS" id="RNF219">
    <property type="organism name" value="human"/>
</dbReference>
<dbReference type="GenomeRNAi" id="79596"/>
<dbReference type="Pharos" id="Q5W0B1">
    <property type="development level" value="Tbio"/>
</dbReference>
<dbReference type="PRO" id="PR:Q5W0B1"/>
<dbReference type="Proteomes" id="UP000005640">
    <property type="component" value="Chromosome 13"/>
</dbReference>
<dbReference type="RNAct" id="Q5W0B1">
    <property type="molecule type" value="protein"/>
</dbReference>
<dbReference type="Bgee" id="ENSG00000152193">
    <property type="expression patterns" value="Expressed in secondary oocyte and 195 other cell types or tissues"/>
</dbReference>
<dbReference type="GO" id="GO:0000785">
    <property type="term" value="C:chromatin"/>
    <property type="evidence" value="ECO:0000314"/>
    <property type="project" value="UniProtKB"/>
</dbReference>
<dbReference type="GO" id="GO:0003682">
    <property type="term" value="F:chromatin binding"/>
    <property type="evidence" value="ECO:0000314"/>
    <property type="project" value="UniProtKB"/>
</dbReference>
<dbReference type="GO" id="GO:0004842">
    <property type="term" value="F:ubiquitin-protein transferase activity"/>
    <property type="evidence" value="ECO:0000314"/>
    <property type="project" value="UniProtKB"/>
</dbReference>
<dbReference type="GO" id="GO:0008270">
    <property type="term" value="F:zinc ion binding"/>
    <property type="evidence" value="ECO:0007669"/>
    <property type="project" value="UniProtKB-KW"/>
</dbReference>
<dbReference type="GO" id="GO:0051865">
    <property type="term" value="P:protein autoubiquitination"/>
    <property type="evidence" value="ECO:0000314"/>
    <property type="project" value="UniProtKB"/>
</dbReference>
<dbReference type="GO" id="GO:0006513">
    <property type="term" value="P:protein monoubiquitination"/>
    <property type="evidence" value="ECO:0000314"/>
    <property type="project" value="UniProtKB"/>
</dbReference>
<dbReference type="GO" id="GO:0006275">
    <property type="term" value="P:regulation of DNA replication"/>
    <property type="evidence" value="ECO:0000314"/>
    <property type="project" value="UniProtKB"/>
</dbReference>
<dbReference type="CDD" id="cd16562">
    <property type="entry name" value="RING-HC_RNF219"/>
    <property type="match status" value="1"/>
</dbReference>
<dbReference type="Gene3D" id="3.30.40.10">
    <property type="entry name" value="Zinc/RING finger domain, C3HC4 (zinc finger)"/>
    <property type="match status" value="1"/>
</dbReference>
<dbReference type="InterPro" id="IPR039209">
    <property type="entry name" value="OBI1"/>
</dbReference>
<dbReference type="InterPro" id="IPR035691">
    <property type="entry name" value="OBI1_RING-HC"/>
</dbReference>
<dbReference type="InterPro" id="IPR001841">
    <property type="entry name" value="Znf_RING"/>
</dbReference>
<dbReference type="InterPro" id="IPR013083">
    <property type="entry name" value="Znf_RING/FYVE/PHD"/>
</dbReference>
<dbReference type="PANTHER" id="PTHR14609:SF1">
    <property type="entry name" value="ORC UBIQUITIN LIGASE 1"/>
    <property type="match status" value="1"/>
</dbReference>
<dbReference type="PANTHER" id="PTHR14609">
    <property type="entry name" value="RING FINGER PROTEIN 219"/>
    <property type="match status" value="1"/>
</dbReference>
<dbReference type="Pfam" id="PF13923">
    <property type="entry name" value="zf-C3HC4_2"/>
    <property type="match status" value="1"/>
</dbReference>
<dbReference type="SUPFAM" id="SSF57850">
    <property type="entry name" value="RING/U-box"/>
    <property type="match status" value="1"/>
</dbReference>
<dbReference type="PROSITE" id="PS50089">
    <property type="entry name" value="ZF_RING_2"/>
    <property type="match status" value="1"/>
</dbReference>
<feature type="chain" id="PRO_0000055876" description="ORC ubiquitin ligase 1">
    <location>
        <begin position="1"/>
        <end position="726"/>
    </location>
</feature>
<feature type="zinc finger region" description="RING-type; degenerate" evidence="3">
    <location>
        <begin position="18"/>
        <end position="56"/>
    </location>
</feature>
<feature type="region of interest" description="Disordered" evidence="4">
    <location>
        <begin position="276"/>
        <end position="334"/>
    </location>
</feature>
<feature type="region of interest" description="Disordered" evidence="4">
    <location>
        <begin position="436"/>
        <end position="460"/>
    </location>
</feature>
<feature type="region of interest" description="Disordered" evidence="4">
    <location>
        <begin position="570"/>
        <end position="602"/>
    </location>
</feature>
<feature type="region of interest" description="Disordered" evidence="4">
    <location>
        <begin position="687"/>
        <end position="726"/>
    </location>
</feature>
<feature type="coiled-coil region" evidence="2">
    <location>
        <begin position="87"/>
        <end position="129"/>
    </location>
</feature>
<feature type="coiled-coil region" evidence="2">
    <location>
        <begin position="155"/>
        <end position="270"/>
    </location>
</feature>
<feature type="compositionally biased region" description="Basic and acidic residues" evidence="4">
    <location>
        <begin position="280"/>
        <end position="290"/>
    </location>
</feature>
<feature type="compositionally biased region" description="Low complexity" evidence="4">
    <location>
        <begin position="304"/>
        <end position="318"/>
    </location>
</feature>
<feature type="compositionally biased region" description="Polar residues" evidence="4">
    <location>
        <begin position="319"/>
        <end position="334"/>
    </location>
</feature>
<feature type="compositionally biased region" description="Basic and acidic residues" evidence="4">
    <location>
        <begin position="446"/>
        <end position="457"/>
    </location>
</feature>
<feature type="compositionally biased region" description="Basic and acidic residues" evidence="4">
    <location>
        <begin position="579"/>
        <end position="588"/>
    </location>
</feature>
<feature type="compositionally biased region" description="Polar residues" evidence="4">
    <location>
        <begin position="589"/>
        <end position="602"/>
    </location>
</feature>
<feature type="compositionally biased region" description="Low complexity" evidence="4">
    <location>
        <begin position="713"/>
        <end position="726"/>
    </location>
</feature>
<feature type="modified residue" description="Phosphoserine" evidence="10">
    <location>
        <position position="210"/>
    </location>
</feature>
<feature type="modified residue" description="Phosphoserine" evidence="10">
    <location>
        <position position="526"/>
    </location>
</feature>
<feature type="modified residue" description="Phosphoserine" evidence="1">
    <location>
        <position position="553"/>
    </location>
</feature>
<feature type="modified residue" description="Phosphoserine" evidence="10">
    <location>
        <position position="561"/>
    </location>
</feature>
<feature type="modified residue" description="Phosphoserine" evidence="1">
    <location>
        <position position="568"/>
    </location>
</feature>
<feature type="modified residue" description="Phosphoserine" evidence="1">
    <location>
        <position position="570"/>
    </location>
</feature>
<feature type="modified residue" description="Phosphoserine" evidence="9">
    <location>
        <position position="719"/>
    </location>
</feature>
<feature type="modified residue" description="Phosphoserine" evidence="10">
    <location>
        <position position="721"/>
    </location>
</feature>
<feature type="mutagenesis site" description="Loss of E3 ubiquitin transferase activity. No effect on association with ORC complex." evidence="5">
    <original>C</original>
    <variation>S</variation>
    <location>
        <position position="38"/>
    </location>
</feature>
<feature type="sequence conflict" description="In Ref. 1; CAB66586." evidence="7" ref="1">
    <original>T</original>
    <variation>A</variation>
    <location>
        <position position="126"/>
    </location>
</feature>
<feature type="sequence conflict" description="In Ref. 1; CAB66586." evidence="7" ref="1">
    <original>L</original>
    <variation>F</variation>
    <location>
        <position position="386"/>
    </location>
</feature>
<feature type="sequence conflict" description="In Ref. 1; CAB66586." evidence="7" ref="1">
    <original>P</original>
    <variation>T</variation>
    <location>
        <position position="462"/>
    </location>
</feature>
<comment type="function">
    <text evidence="5">E3 ubiquitin ligase essential for DNA replication origin activation during S phase (PubMed:31160578). Acts as a replication origin selector which selects the origins to be fired and catalyzes the multi-mono-ubiquitination of a subset of chromatin-bound ORC3 and ORC5 during S-phase (PubMed:31160578).</text>
</comment>
<comment type="catalytic activity">
    <reaction evidence="5">
        <text>S-ubiquitinyl-[E2 ubiquitin-conjugating enzyme]-L-cysteine + [acceptor protein]-L-lysine = [E2 ubiquitin-conjugating enzyme]-L-cysteine + N(6)-ubiquitinyl-[acceptor protein]-L-lysine.</text>
        <dbReference type="EC" id="2.3.2.27"/>
    </reaction>
</comment>
<comment type="subunit">
    <text evidence="5">Associates with ORC complex (PubMed:31160578). Binds to chromatin; association is cell cycle-regulated, absent from mitotic chromosomes, is associated with chromatin from G1 and partially released from chromatin from mid S-phase (PubMed:31160578).</text>
</comment>
<comment type="interaction">
    <interactant intactId="EBI-2562035">
        <id>Q5W0B1</id>
    </interactant>
    <interactant intactId="EBI-5235340">
        <id>Q7Z699</id>
        <label>SPRED1</label>
    </interactant>
    <organismsDiffer>false</organismsDiffer>
    <experiments>3</experiments>
</comment>
<comment type="interaction">
    <interactant intactId="EBI-2562035">
        <id>Q5W0B1</id>
    </interactant>
    <interactant intactId="EBI-954696">
        <id>Q8N8B7</id>
        <label>TCEANC</label>
    </interactant>
    <organismsDiffer>false</organismsDiffer>
    <experiments>3</experiments>
</comment>
<comment type="subcellular location">
    <subcellularLocation>
        <location evidence="5">Chromosome</location>
    </subcellularLocation>
    <text evidence="5">Association to chromatin is cell cycle-regulated, absent from mitotic chromosomes, is associated with chromatin from G1 and partially released from chromatin from mid S-phase.</text>
</comment>
<comment type="PTM">
    <text evidence="5">Auto-ubiquitinated.</text>
</comment>
<comment type="sequence caution" evidence="7">
    <conflict type="erroneous initiation">
        <sequence resource="EMBL-CDS" id="BAB14594"/>
    </conflict>
    <text>Truncated N-terminus.</text>
</comment>
<comment type="sequence caution" evidence="7">
    <conflict type="frameshift">
        <sequence resource="EMBL" id="BC028586"/>
    </conflict>
</comment>
<comment type="sequence caution" evidence="7">
    <conflict type="frameshift">
        <sequence resource="EMBL-CDS" id="CAB66586"/>
    </conflict>
</comment>